<name>PCKG_MYCLB</name>
<sequence>MTSATIPGLDTAPTNHQKLLSWLEEVAELTHPAQVVFADGSDEEWQQLTERLVAAGTFKKLNDEKHPNSYLALSDPSDVARVESRTFICSEREIDAGPTNNWMDPAEMRSTMTELYRGCMRGRTMWVVPFCMGPPGAEDPKLGVEITDSEYVVASMKVMTRMGTSALEKIGDDGFFVKALHSVGAPLQPGQQDMPWPCNETKYITHFPETREIWSYGSGYGGNALLGKKCYSLRIASAMAHDEGWLAEHMLILKLISPENKAYYFAAAFPSACGKTNLAMLQPTIPGWRAETLGDDIAWMRFGKDGRLYAVNPEFGFFGVAPGTNWKSNPNAMRTIAAGNTVFTNVALTDDNDVWWEGLEGEPAHLIDWKGNDWYAGKTETPAAHSNSRYCTPMSQCPILAPEWDDPRGVPISVILFGARRKTTVPLVTQARNWQHGVFMGATMGSEQTAAAEGKVGTVRRDPMAMLPFMGYHVGDYFQHWIDLGKHSDESNLPKVFFVNWFRRGEGGKFLWPGFGENSRVLKWIVDRIEHKAGGQDTLIGIVPTATDLDLDGLDISSDDVAKALAVDPAEWRNELPLIEEWFEFVGDKLPSGMQDEFEALKQRLAKED</sequence>
<evidence type="ECO:0000255" key="1">
    <source>
        <dbReference type="HAMAP-Rule" id="MF_00452"/>
    </source>
</evidence>
<comment type="function">
    <text evidence="1">Catalyzes the conversion of oxaloacetate (OAA) to phosphoenolpyruvate (PEP), the rate-limiting step in the metabolic pathway that produces glucose from lactate and other precursors derived from the citric acid cycle.</text>
</comment>
<comment type="catalytic activity">
    <reaction evidence="1">
        <text>oxaloacetate + GTP = phosphoenolpyruvate + GDP + CO2</text>
        <dbReference type="Rhea" id="RHEA:10388"/>
        <dbReference type="ChEBI" id="CHEBI:16452"/>
        <dbReference type="ChEBI" id="CHEBI:16526"/>
        <dbReference type="ChEBI" id="CHEBI:37565"/>
        <dbReference type="ChEBI" id="CHEBI:58189"/>
        <dbReference type="ChEBI" id="CHEBI:58702"/>
        <dbReference type="EC" id="4.1.1.32"/>
    </reaction>
</comment>
<comment type="cofactor">
    <cofactor evidence="1">
        <name>Mn(2+)</name>
        <dbReference type="ChEBI" id="CHEBI:29035"/>
    </cofactor>
    <text evidence="1">Binds 1 Mn(2+) ion per subunit.</text>
</comment>
<comment type="pathway">
    <text evidence="1">Carbohydrate biosynthesis; gluconeogenesis.</text>
</comment>
<comment type="subunit">
    <text evidence="1">Monomer.</text>
</comment>
<comment type="subcellular location">
    <subcellularLocation>
        <location evidence="1">Cytoplasm</location>
    </subcellularLocation>
</comment>
<comment type="similarity">
    <text evidence="1">Belongs to the phosphoenolpyruvate carboxykinase [GTP] family.</text>
</comment>
<reference key="1">
    <citation type="journal article" date="2009" name="Nat. Genet.">
        <title>Comparative genomic and phylogeographic analysis of Mycobacterium leprae.</title>
        <authorList>
            <person name="Monot M."/>
            <person name="Honore N."/>
            <person name="Garnier T."/>
            <person name="Zidane N."/>
            <person name="Sherafi D."/>
            <person name="Paniz-Mondolfi A."/>
            <person name="Matsuoka M."/>
            <person name="Taylor G.M."/>
            <person name="Donoghue H.D."/>
            <person name="Bouwman A."/>
            <person name="Mays S."/>
            <person name="Watson C."/>
            <person name="Lockwood D."/>
            <person name="Khamispour A."/>
            <person name="Dowlati Y."/>
            <person name="Jianping S."/>
            <person name="Rea T.H."/>
            <person name="Vera-Cabrera L."/>
            <person name="Stefani M.M."/>
            <person name="Banu S."/>
            <person name="Macdonald M."/>
            <person name="Sapkota B.R."/>
            <person name="Spencer J.S."/>
            <person name="Thomas J."/>
            <person name="Harshman K."/>
            <person name="Singh P."/>
            <person name="Busso P."/>
            <person name="Gattiker A."/>
            <person name="Rougemont J."/>
            <person name="Brennan P.J."/>
            <person name="Cole S.T."/>
        </authorList>
    </citation>
    <scope>NUCLEOTIDE SEQUENCE [LARGE SCALE GENOMIC DNA]</scope>
    <source>
        <strain>Br4923</strain>
    </source>
</reference>
<dbReference type="EC" id="4.1.1.32" evidence="1"/>
<dbReference type="EMBL" id="FM211192">
    <property type="protein sequence ID" value="CAR72724.1"/>
    <property type="molecule type" value="Genomic_DNA"/>
</dbReference>
<dbReference type="SMR" id="B8ZTI5"/>
<dbReference type="KEGG" id="mlb:MLBr02624"/>
<dbReference type="HOGENOM" id="CLU_028872_1_1_11"/>
<dbReference type="UniPathway" id="UPA00138"/>
<dbReference type="Proteomes" id="UP000006900">
    <property type="component" value="Chromosome"/>
</dbReference>
<dbReference type="GO" id="GO:0005829">
    <property type="term" value="C:cytosol"/>
    <property type="evidence" value="ECO:0007669"/>
    <property type="project" value="TreeGrafter"/>
</dbReference>
<dbReference type="GO" id="GO:0005525">
    <property type="term" value="F:GTP binding"/>
    <property type="evidence" value="ECO:0007669"/>
    <property type="project" value="UniProtKB-UniRule"/>
</dbReference>
<dbReference type="GO" id="GO:0030145">
    <property type="term" value="F:manganese ion binding"/>
    <property type="evidence" value="ECO:0007669"/>
    <property type="project" value="UniProtKB-UniRule"/>
</dbReference>
<dbReference type="GO" id="GO:0004613">
    <property type="term" value="F:phosphoenolpyruvate carboxykinase (GTP) activity"/>
    <property type="evidence" value="ECO:0007669"/>
    <property type="project" value="UniProtKB-UniRule"/>
</dbReference>
<dbReference type="GO" id="GO:0071333">
    <property type="term" value="P:cellular response to glucose stimulus"/>
    <property type="evidence" value="ECO:0007669"/>
    <property type="project" value="TreeGrafter"/>
</dbReference>
<dbReference type="GO" id="GO:0006094">
    <property type="term" value="P:gluconeogenesis"/>
    <property type="evidence" value="ECO:0007669"/>
    <property type="project" value="UniProtKB-UniRule"/>
</dbReference>
<dbReference type="GO" id="GO:0046327">
    <property type="term" value="P:glycerol biosynthetic process from pyruvate"/>
    <property type="evidence" value="ECO:0007669"/>
    <property type="project" value="TreeGrafter"/>
</dbReference>
<dbReference type="GO" id="GO:0006107">
    <property type="term" value="P:oxaloacetate metabolic process"/>
    <property type="evidence" value="ECO:0007669"/>
    <property type="project" value="TreeGrafter"/>
</dbReference>
<dbReference type="GO" id="GO:0019543">
    <property type="term" value="P:propionate catabolic process"/>
    <property type="evidence" value="ECO:0007669"/>
    <property type="project" value="TreeGrafter"/>
</dbReference>
<dbReference type="GO" id="GO:0033993">
    <property type="term" value="P:response to lipid"/>
    <property type="evidence" value="ECO:0007669"/>
    <property type="project" value="TreeGrafter"/>
</dbReference>
<dbReference type="GO" id="GO:0042594">
    <property type="term" value="P:response to starvation"/>
    <property type="evidence" value="ECO:0007669"/>
    <property type="project" value="TreeGrafter"/>
</dbReference>
<dbReference type="CDD" id="cd00819">
    <property type="entry name" value="PEPCK_GTP"/>
    <property type="match status" value="1"/>
</dbReference>
<dbReference type="FunFam" id="3.40.449.10:FF:000005">
    <property type="entry name" value="Phosphoenolpyruvate carboxykinase [GTP]"/>
    <property type="match status" value="1"/>
</dbReference>
<dbReference type="Gene3D" id="3.90.228.20">
    <property type="match status" value="1"/>
</dbReference>
<dbReference type="Gene3D" id="3.40.449.10">
    <property type="entry name" value="Phosphoenolpyruvate Carboxykinase, domain 1"/>
    <property type="match status" value="1"/>
</dbReference>
<dbReference type="Gene3D" id="2.170.8.10">
    <property type="entry name" value="Phosphoenolpyruvate Carboxykinase, domain 2"/>
    <property type="match status" value="1"/>
</dbReference>
<dbReference type="HAMAP" id="MF_00452">
    <property type="entry name" value="PEPCK_GTP"/>
    <property type="match status" value="1"/>
</dbReference>
<dbReference type="InterPro" id="IPR018091">
    <property type="entry name" value="PEP_carboxykin_GTP_CS"/>
</dbReference>
<dbReference type="InterPro" id="IPR013035">
    <property type="entry name" value="PEP_carboxykinase_C"/>
</dbReference>
<dbReference type="InterPro" id="IPR008209">
    <property type="entry name" value="PEP_carboxykinase_GTP"/>
</dbReference>
<dbReference type="InterPro" id="IPR035077">
    <property type="entry name" value="PEP_carboxykinase_GTP_C"/>
</dbReference>
<dbReference type="InterPro" id="IPR035078">
    <property type="entry name" value="PEP_carboxykinase_GTP_N"/>
</dbReference>
<dbReference type="InterPro" id="IPR008210">
    <property type="entry name" value="PEP_carboxykinase_N"/>
</dbReference>
<dbReference type="NCBIfam" id="NF003253">
    <property type="entry name" value="PRK04210.1"/>
    <property type="match status" value="1"/>
</dbReference>
<dbReference type="PANTHER" id="PTHR11561">
    <property type="entry name" value="PHOSPHOENOLPYRUVATE CARBOXYKINASE"/>
    <property type="match status" value="1"/>
</dbReference>
<dbReference type="PANTHER" id="PTHR11561:SF0">
    <property type="entry name" value="PHOSPHOENOLPYRUVATE CARBOXYKINASE [GTP]-RELATED"/>
    <property type="match status" value="1"/>
</dbReference>
<dbReference type="Pfam" id="PF00821">
    <property type="entry name" value="PEPCK_GTP"/>
    <property type="match status" value="1"/>
</dbReference>
<dbReference type="Pfam" id="PF17297">
    <property type="entry name" value="PEPCK_N"/>
    <property type="match status" value="1"/>
</dbReference>
<dbReference type="PIRSF" id="PIRSF001348">
    <property type="entry name" value="PEP_carboxykinase_GTP"/>
    <property type="match status" value="1"/>
</dbReference>
<dbReference type="SUPFAM" id="SSF68923">
    <property type="entry name" value="PEP carboxykinase N-terminal domain"/>
    <property type="match status" value="1"/>
</dbReference>
<dbReference type="SUPFAM" id="SSF53795">
    <property type="entry name" value="PEP carboxykinase-like"/>
    <property type="match status" value="1"/>
</dbReference>
<dbReference type="PROSITE" id="PS00505">
    <property type="entry name" value="PEPCK_GTP"/>
    <property type="match status" value="1"/>
</dbReference>
<proteinExistence type="inferred from homology"/>
<protein>
    <recommendedName>
        <fullName evidence="1">Phosphoenolpyruvate carboxykinase [GTP]</fullName>
        <shortName evidence="1">PEP carboxykinase</shortName>
        <shortName evidence="1">PEPCK</shortName>
        <ecNumber evidence="1">4.1.1.32</ecNumber>
    </recommendedName>
</protein>
<feature type="chain" id="PRO_1000192345" description="Phosphoenolpyruvate carboxykinase [GTP]">
    <location>
        <begin position="1"/>
        <end position="609"/>
    </location>
</feature>
<feature type="active site" evidence="1">
    <location>
        <position position="273"/>
    </location>
</feature>
<feature type="binding site" evidence="1">
    <location>
        <position position="81"/>
    </location>
    <ligand>
        <name>substrate</name>
    </ligand>
</feature>
<feature type="binding site" evidence="1">
    <location>
        <begin position="220"/>
        <end position="222"/>
    </location>
    <ligand>
        <name>substrate</name>
    </ligand>
</feature>
<feature type="binding site" evidence="1">
    <location>
        <position position="229"/>
    </location>
    <ligand>
        <name>Mn(2+)</name>
        <dbReference type="ChEBI" id="CHEBI:29035"/>
    </ligand>
</feature>
<feature type="binding site" evidence="1">
    <location>
        <position position="249"/>
    </location>
    <ligand>
        <name>Mn(2+)</name>
        <dbReference type="ChEBI" id="CHEBI:29035"/>
    </ligand>
</feature>
<feature type="binding site" evidence="1">
    <location>
        <position position="271"/>
    </location>
    <ligand>
        <name>substrate</name>
    </ligand>
</feature>
<feature type="binding site" evidence="1">
    <location>
        <begin position="272"/>
        <end position="277"/>
    </location>
    <ligand>
        <name>GTP</name>
        <dbReference type="ChEBI" id="CHEBI:37565"/>
    </ligand>
</feature>
<feature type="binding site" evidence="1">
    <location>
        <position position="296"/>
    </location>
    <ligand>
        <name>Mn(2+)</name>
        <dbReference type="ChEBI" id="CHEBI:29035"/>
    </ligand>
</feature>
<feature type="binding site" evidence="1">
    <location>
        <begin position="387"/>
        <end position="389"/>
    </location>
    <ligand>
        <name>substrate</name>
    </ligand>
</feature>
<feature type="binding site" evidence="1">
    <location>
        <position position="389"/>
    </location>
    <ligand>
        <name>GTP</name>
        <dbReference type="ChEBI" id="CHEBI:37565"/>
    </ligand>
</feature>
<feature type="binding site" evidence="1">
    <location>
        <position position="420"/>
    </location>
    <ligand>
        <name>GTP</name>
        <dbReference type="ChEBI" id="CHEBI:37565"/>
    </ligand>
</feature>
<feature type="binding site" evidence="1">
    <location>
        <begin position="515"/>
        <end position="518"/>
    </location>
    <ligand>
        <name>GTP</name>
        <dbReference type="ChEBI" id="CHEBI:37565"/>
    </ligand>
</feature>
<keyword id="KW-0963">Cytoplasm</keyword>
<keyword id="KW-0210">Decarboxylase</keyword>
<keyword id="KW-0312">Gluconeogenesis</keyword>
<keyword id="KW-0342">GTP-binding</keyword>
<keyword id="KW-0456">Lyase</keyword>
<keyword id="KW-0464">Manganese</keyword>
<keyword id="KW-0479">Metal-binding</keyword>
<keyword id="KW-0547">Nucleotide-binding</keyword>
<organism>
    <name type="scientific">Mycobacterium leprae (strain Br4923)</name>
    <dbReference type="NCBI Taxonomy" id="561304"/>
    <lineage>
        <taxon>Bacteria</taxon>
        <taxon>Bacillati</taxon>
        <taxon>Actinomycetota</taxon>
        <taxon>Actinomycetes</taxon>
        <taxon>Mycobacteriales</taxon>
        <taxon>Mycobacteriaceae</taxon>
        <taxon>Mycobacterium</taxon>
    </lineage>
</organism>
<accession>B8ZTI5</accession>
<gene>
    <name evidence="1" type="primary">pckG</name>
    <name type="ordered locus">MLBr02624</name>
</gene>